<name>OBG_CORGB</name>
<dbReference type="EC" id="3.6.5.-" evidence="1"/>
<dbReference type="EMBL" id="AP009044">
    <property type="protein sequence ID" value="BAF55244.1"/>
    <property type="molecule type" value="Genomic_DNA"/>
</dbReference>
<dbReference type="RefSeq" id="WP_011897691.1">
    <property type="nucleotide sequence ID" value="NC_009342.1"/>
</dbReference>
<dbReference type="SMR" id="A4QG78"/>
<dbReference type="KEGG" id="cgt:cgR_2240"/>
<dbReference type="HOGENOM" id="CLU_011747_0_0_11"/>
<dbReference type="PhylomeDB" id="A4QG78"/>
<dbReference type="Proteomes" id="UP000006698">
    <property type="component" value="Chromosome"/>
</dbReference>
<dbReference type="GO" id="GO:0005737">
    <property type="term" value="C:cytoplasm"/>
    <property type="evidence" value="ECO:0007669"/>
    <property type="project" value="UniProtKB-SubCell"/>
</dbReference>
<dbReference type="GO" id="GO:0005525">
    <property type="term" value="F:GTP binding"/>
    <property type="evidence" value="ECO:0007669"/>
    <property type="project" value="UniProtKB-UniRule"/>
</dbReference>
<dbReference type="GO" id="GO:0003924">
    <property type="term" value="F:GTPase activity"/>
    <property type="evidence" value="ECO:0007669"/>
    <property type="project" value="UniProtKB-UniRule"/>
</dbReference>
<dbReference type="GO" id="GO:0000287">
    <property type="term" value="F:magnesium ion binding"/>
    <property type="evidence" value="ECO:0007669"/>
    <property type="project" value="InterPro"/>
</dbReference>
<dbReference type="GO" id="GO:0042254">
    <property type="term" value="P:ribosome biogenesis"/>
    <property type="evidence" value="ECO:0007669"/>
    <property type="project" value="UniProtKB-UniRule"/>
</dbReference>
<dbReference type="CDD" id="cd01898">
    <property type="entry name" value="Obg"/>
    <property type="match status" value="1"/>
</dbReference>
<dbReference type="FunFam" id="2.70.210.12:FF:000001">
    <property type="entry name" value="GTPase Obg"/>
    <property type="match status" value="1"/>
</dbReference>
<dbReference type="Gene3D" id="3.30.300.350">
    <property type="entry name" value="GTP-binding protein OBG, C-terminal domain"/>
    <property type="match status" value="1"/>
</dbReference>
<dbReference type="Gene3D" id="2.70.210.12">
    <property type="entry name" value="GTP1/OBG domain"/>
    <property type="match status" value="1"/>
</dbReference>
<dbReference type="Gene3D" id="3.40.50.300">
    <property type="entry name" value="P-loop containing nucleotide triphosphate hydrolases"/>
    <property type="match status" value="1"/>
</dbReference>
<dbReference type="HAMAP" id="MF_01454">
    <property type="entry name" value="GTPase_Obg"/>
    <property type="match status" value="1"/>
</dbReference>
<dbReference type="InterPro" id="IPR031167">
    <property type="entry name" value="G_OBG"/>
</dbReference>
<dbReference type="InterPro" id="IPR006073">
    <property type="entry name" value="GTP-bd"/>
</dbReference>
<dbReference type="InterPro" id="IPR014100">
    <property type="entry name" value="GTP-bd_Obg/CgtA"/>
</dbReference>
<dbReference type="InterPro" id="IPR036346">
    <property type="entry name" value="GTP-bd_prot_GTP1/OBG_C_sf"/>
</dbReference>
<dbReference type="InterPro" id="IPR006074">
    <property type="entry name" value="GTP1-OBG_CS"/>
</dbReference>
<dbReference type="InterPro" id="IPR006169">
    <property type="entry name" value="GTP1_OBG_dom"/>
</dbReference>
<dbReference type="InterPro" id="IPR036726">
    <property type="entry name" value="GTP1_OBG_dom_sf"/>
</dbReference>
<dbReference type="InterPro" id="IPR045086">
    <property type="entry name" value="OBG_GTPase"/>
</dbReference>
<dbReference type="InterPro" id="IPR015349">
    <property type="entry name" value="OCT_dom"/>
</dbReference>
<dbReference type="InterPro" id="IPR027417">
    <property type="entry name" value="P-loop_NTPase"/>
</dbReference>
<dbReference type="NCBIfam" id="TIGR02729">
    <property type="entry name" value="Obg_CgtA"/>
    <property type="match status" value="1"/>
</dbReference>
<dbReference type="NCBIfam" id="TIGR03595">
    <property type="entry name" value="Obg_CgtA_exten"/>
    <property type="match status" value="1"/>
</dbReference>
<dbReference type="NCBIfam" id="NF008954">
    <property type="entry name" value="PRK12296.1"/>
    <property type="match status" value="1"/>
</dbReference>
<dbReference type="NCBIfam" id="NF008955">
    <property type="entry name" value="PRK12297.1"/>
    <property type="match status" value="1"/>
</dbReference>
<dbReference type="NCBIfam" id="NF008956">
    <property type="entry name" value="PRK12299.1"/>
    <property type="match status" value="1"/>
</dbReference>
<dbReference type="PANTHER" id="PTHR11702">
    <property type="entry name" value="DEVELOPMENTALLY REGULATED GTP-BINDING PROTEIN-RELATED"/>
    <property type="match status" value="1"/>
</dbReference>
<dbReference type="PANTHER" id="PTHR11702:SF31">
    <property type="entry name" value="MITOCHONDRIAL RIBOSOME-ASSOCIATED GTPASE 2"/>
    <property type="match status" value="1"/>
</dbReference>
<dbReference type="Pfam" id="PF09269">
    <property type="entry name" value="DUF1967"/>
    <property type="match status" value="1"/>
</dbReference>
<dbReference type="Pfam" id="PF01018">
    <property type="entry name" value="GTP1_OBG"/>
    <property type="match status" value="1"/>
</dbReference>
<dbReference type="Pfam" id="PF01926">
    <property type="entry name" value="MMR_HSR1"/>
    <property type="match status" value="1"/>
</dbReference>
<dbReference type="PRINTS" id="PR00326">
    <property type="entry name" value="GTP1OBG"/>
</dbReference>
<dbReference type="SUPFAM" id="SSF102741">
    <property type="entry name" value="Obg GTP-binding protein C-terminal domain"/>
    <property type="match status" value="1"/>
</dbReference>
<dbReference type="SUPFAM" id="SSF82051">
    <property type="entry name" value="Obg GTP-binding protein N-terminal domain"/>
    <property type="match status" value="1"/>
</dbReference>
<dbReference type="SUPFAM" id="SSF52540">
    <property type="entry name" value="P-loop containing nucleoside triphosphate hydrolases"/>
    <property type="match status" value="1"/>
</dbReference>
<dbReference type="PROSITE" id="PS51710">
    <property type="entry name" value="G_OBG"/>
    <property type="match status" value="1"/>
</dbReference>
<dbReference type="PROSITE" id="PS00905">
    <property type="entry name" value="GTP1_OBG"/>
    <property type="match status" value="1"/>
</dbReference>
<dbReference type="PROSITE" id="PS51883">
    <property type="entry name" value="OBG"/>
    <property type="match status" value="1"/>
</dbReference>
<dbReference type="PROSITE" id="PS51881">
    <property type="entry name" value="OCT"/>
    <property type="match status" value="1"/>
</dbReference>
<evidence type="ECO:0000255" key="1">
    <source>
        <dbReference type="HAMAP-Rule" id="MF_01454"/>
    </source>
</evidence>
<evidence type="ECO:0000255" key="2">
    <source>
        <dbReference type="PROSITE-ProRule" id="PRU01229"/>
    </source>
</evidence>
<evidence type="ECO:0000255" key="3">
    <source>
        <dbReference type="PROSITE-ProRule" id="PRU01231"/>
    </source>
</evidence>
<sequence length="501" mass="53635">MNRFIDRVVLHLAAGDGGNGCVSVHREKFKPLGGPDGGNGGHGGDIILEVTAQVHTLLDFHFHPHVKAERGANGAGDHRNGARGKDLVLEVPPGTVVLNEKGETLADLTSVGMKFIAAAGGNGGLGNAALASKARKAPGFALIGEPGEAHDLILELKSMADVGLVGFPSAGKSSLISVMSAAKPKIGDYPFTTLQPNLGVVNVGHETFTMADVPGLIPGASEGKGLGLDFLRHIERTSVLVHVVDTATMDPGRDPISDIEALEAELAAYQSALDEDTGLGDLSQRPRIVVLNKADVPEAEELAEFLKEDIEKQFGWPVFIISAVARKGLDPLKYKLLEIVQDARKKRPKEKAESVIIKPKAVDHRTKGQFQIKPDPEVQGGFIITGEKPERWILQTDFENDEAVGYLADRLAKLGIEDGLRKAGAHVGANVTIGGISFEWEPMTTAGDDPILTGRGTDVRLEQTSRISAAERKRASQVRRGLIDELDYGEDQEASRERWEG</sequence>
<accession>A4QG78</accession>
<comment type="function">
    <text evidence="1">An essential GTPase which binds GTP, GDP and possibly (p)ppGpp with moderate affinity, with high nucleotide exchange rates and a fairly low GTP hydrolysis rate. Plays a role in control of the cell cycle, stress response, ribosome biogenesis and in those bacteria that undergo differentiation, in morphogenesis control.</text>
</comment>
<comment type="cofactor">
    <cofactor evidence="1">
        <name>Mg(2+)</name>
        <dbReference type="ChEBI" id="CHEBI:18420"/>
    </cofactor>
</comment>
<comment type="subunit">
    <text evidence="1">Monomer.</text>
</comment>
<comment type="subcellular location">
    <subcellularLocation>
        <location evidence="1">Cytoplasm</location>
    </subcellularLocation>
</comment>
<comment type="similarity">
    <text evidence="1">Belongs to the TRAFAC class OBG-HflX-like GTPase superfamily. OBG GTPase family.</text>
</comment>
<protein>
    <recommendedName>
        <fullName evidence="1">GTPase Obg</fullName>
        <ecNumber evidence="1">3.6.5.-</ecNumber>
    </recommendedName>
    <alternativeName>
        <fullName evidence="1">GTP-binding protein Obg</fullName>
    </alternativeName>
</protein>
<reference key="1">
    <citation type="journal article" date="2007" name="Microbiology">
        <title>Comparative analysis of the Corynebacterium glutamicum group and complete genome sequence of strain R.</title>
        <authorList>
            <person name="Yukawa H."/>
            <person name="Omumasaba C.A."/>
            <person name="Nonaka H."/>
            <person name="Kos P."/>
            <person name="Okai N."/>
            <person name="Suzuki N."/>
            <person name="Suda M."/>
            <person name="Tsuge Y."/>
            <person name="Watanabe J."/>
            <person name="Ikeda Y."/>
            <person name="Vertes A.A."/>
            <person name="Inui M."/>
        </authorList>
    </citation>
    <scope>NUCLEOTIDE SEQUENCE [LARGE SCALE GENOMIC DNA]</scope>
    <source>
        <strain>R</strain>
    </source>
</reference>
<keyword id="KW-0963">Cytoplasm</keyword>
<keyword id="KW-0342">GTP-binding</keyword>
<keyword id="KW-0378">Hydrolase</keyword>
<keyword id="KW-0460">Magnesium</keyword>
<keyword id="KW-0479">Metal-binding</keyword>
<keyword id="KW-0547">Nucleotide-binding</keyword>
<organism>
    <name type="scientific">Corynebacterium glutamicum (strain R)</name>
    <dbReference type="NCBI Taxonomy" id="340322"/>
    <lineage>
        <taxon>Bacteria</taxon>
        <taxon>Bacillati</taxon>
        <taxon>Actinomycetota</taxon>
        <taxon>Actinomycetes</taxon>
        <taxon>Mycobacteriales</taxon>
        <taxon>Corynebacteriaceae</taxon>
        <taxon>Corynebacterium</taxon>
    </lineage>
</organism>
<feature type="chain" id="PRO_0000385860" description="GTPase Obg">
    <location>
        <begin position="1"/>
        <end position="501"/>
    </location>
</feature>
<feature type="domain" description="Obg" evidence="3">
    <location>
        <begin position="2"/>
        <end position="159"/>
    </location>
</feature>
<feature type="domain" description="OBG-type G" evidence="1">
    <location>
        <begin position="160"/>
        <end position="341"/>
    </location>
</feature>
<feature type="domain" description="OCT" evidence="2">
    <location>
        <begin position="362"/>
        <end position="442"/>
    </location>
</feature>
<feature type="binding site" evidence="1">
    <location>
        <begin position="166"/>
        <end position="173"/>
    </location>
    <ligand>
        <name>GTP</name>
        <dbReference type="ChEBI" id="CHEBI:37565"/>
    </ligand>
</feature>
<feature type="binding site" evidence="1">
    <location>
        <position position="173"/>
    </location>
    <ligand>
        <name>Mg(2+)</name>
        <dbReference type="ChEBI" id="CHEBI:18420"/>
    </ligand>
</feature>
<feature type="binding site" evidence="1">
    <location>
        <begin position="191"/>
        <end position="195"/>
    </location>
    <ligand>
        <name>GTP</name>
        <dbReference type="ChEBI" id="CHEBI:37565"/>
    </ligand>
</feature>
<feature type="binding site" evidence="1">
    <location>
        <position position="193"/>
    </location>
    <ligand>
        <name>Mg(2+)</name>
        <dbReference type="ChEBI" id="CHEBI:18420"/>
    </ligand>
</feature>
<feature type="binding site" evidence="1">
    <location>
        <begin position="212"/>
        <end position="215"/>
    </location>
    <ligand>
        <name>GTP</name>
        <dbReference type="ChEBI" id="CHEBI:37565"/>
    </ligand>
</feature>
<feature type="binding site" evidence="1">
    <location>
        <begin position="292"/>
        <end position="295"/>
    </location>
    <ligand>
        <name>GTP</name>
        <dbReference type="ChEBI" id="CHEBI:37565"/>
    </ligand>
</feature>
<feature type="binding site" evidence="1">
    <location>
        <begin position="322"/>
        <end position="324"/>
    </location>
    <ligand>
        <name>GTP</name>
        <dbReference type="ChEBI" id="CHEBI:37565"/>
    </ligand>
</feature>
<gene>
    <name evidence="1" type="primary">obg</name>
    <name type="ordered locus">cgR_2240</name>
</gene>
<proteinExistence type="inferred from homology"/>